<keyword id="KW-0963">Cytoplasm</keyword>
<keyword id="KW-0489">Methyltransferase</keyword>
<keyword id="KW-0949">S-adenosyl-L-methionine</keyword>
<keyword id="KW-0808">Transferase</keyword>
<keyword id="KW-0819">tRNA processing</keyword>
<gene>
    <name type="ordered locus">OE_2117F</name>
</gene>
<accession>B0R434</accession>
<proteinExistence type="inferred from homology"/>
<feature type="chain" id="PRO_0000365299" description="tRNA (cytidine(56)-2'-O)-methyltransferase">
    <location>
        <begin position="1"/>
        <end position="192"/>
    </location>
</feature>
<feature type="binding site" evidence="1">
    <location>
        <position position="84"/>
    </location>
    <ligand>
        <name>S-adenosyl-L-methionine</name>
        <dbReference type="ChEBI" id="CHEBI:59789"/>
    </ligand>
</feature>
<feature type="binding site" evidence="1">
    <location>
        <begin position="112"/>
        <end position="116"/>
    </location>
    <ligand>
        <name>S-adenosyl-L-methionine</name>
        <dbReference type="ChEBI" id="CHEBI:59789"/>
    </ligand>
</feature>
<reference key="1">
    <citation type="journal article" date="2008" name="Genomics">
        <title>Evolution in the laboratory: the genome of Halobacterium salinarum strain R1 compared to that of strain NRC-1.</title>
        <authorList>
            <person name="Pfeiffer F."/>
            <person name="Schuster S.C."/>
            <person name="Broicher A."/>
            <person name="Falb M."/>
            <person name="Palm P."/>
            <person name="Rodewald K."/>
            <person name="Ruepp A."/>
            <person name="Soppa J."/>
            <person name="Tittor J."/>
            <person name="Oesterhelt D."/>
        </authorList>
    </citation>
    <scope>NUCLEOTIDE SEQUENCE [LARGE SCALE GENOMIC DNA]</scope>
    <source>
        <strain>ATCC 29341 / DSM 671 / R1</strain>
    </source>
</reference>
<name>TRM56_HALS3</name>
<dbReference type="EC" id="2.1.1.206" evidence="1"/>
<dbReference type="EMBL" id="AM774415">
    <property type="protein sequence ID" value="CAP13499.1"/>
    <property type="molecule type" value="Genomic_DNA"/>
</dbReference>
<dbReference type="RefSeq" id="WP_012289218.1">
    <property type="nucleotide sequence ID" value="NC_010364.1"/>
</dbReference>
<dbReference type="SMR" id="B0R434"/>
<dbReference type="EnsemblBacteria" id="CAP13499">
    <property type="protein sequence ID" value="CAP13499"/>
    <property type="gene ID" value="OE_2117F"/>
</dbReference>
<dbReference type="KEGG" id="hsl:OE_2117F"/>
<dbReference type="HOGENOM" id="CLU_123709_0_0_2"/>
<dbReference type="PhylomeDB" id="B0R434"/>
<dbReference type="Proteomes" id="UP000001321">
    <property type="component" value="Chromosome"/>
</dbReference>
<dbReference type="GO" id="GO:0005737">
    <property type="term" value="C:cytoplasm"/>
    <property type="evidence" value="ECO:0007669"/>
    <property type="project" value="UniProtKB-SubCell"/>
</dbReference>
<dbReference type="GO" id="GO:0106059">
    <property type="term" value="F:tRNA (cytidine(56)-2'-O)-methyltransferase activity"/>
    <property type="evidence" value="ECO:0007669"/>
    <property type="project" value="UniProtKB-EC"/>
</dbReference>
<dbReference type="GO" id="GO:0002128">
    <property type="term" value="P:tRNA nucleoside ribose methylation"/>
    <property type="evidence" value="ECO:0007669"/>
    <property type="project" value="UniProtKB-UniRule"/>
</dbReference>
<dbReference type="Gene3D" id="3.40.1280.10">
    <property type="match status" value="1"/>
</dbReference>
<dbReference type="HAMAP" id="MF_00077">
    <property type="entry name" value="tRNA_methyltr_aTrm56"/>
    <property type="match status" value="1"/>
</dbReference>
<dbReference type="InterPro" id="IPR029028">
    <property type="entry name" value="Alpha/beta_knot_MTases"/>
</dbReference>
<dbReference type="InterPro" id="IPR029026">
    <property type="entry name" value="tRNA_m1G_MTases_N"/>
</dbReference>
<dbReference type="InterPro" id="IPR002845">
    <property type="entry name" value="tRNA_mtfrase_aTrm56"/>
</dbReference>
<dbReference type="NCBIfam" id="NF003048">
    <property type="entry name" value="PRK03958.1"/>
    <property type="match status" value="1"/>
</dbReference>
<dbReference type="PANTHER" id="PTHR42197">
    <property type="entry name" value="TRNA (CYTIDINE(56)-2'-O)-METHYLTRANSFERASE"/>
    <property type="match status" value="1"/>
</dbReference>
<dbReference type="PANTHER" id="PTHR42197:SF1">
    <property type="entry name" value="TRNA (CYTIDINE(56)-2'-O)-METHYLTRANSFERASE"/>
    <property type="match status" value="1"/>
</dbReference>
<dbReference type="Pfam" id="PF01994">
    <property type="entry name" value="Trm56"/>
    <property type="match status" value="1"/>
</dbReference>
<dbReference type="PIRSF" id="PIRSF016123">
    <property type="entry name" value="UCP016123"/>
    <property type="match status" value="1"/>
</dbReference>
<dbReference type="SUPFAM" id="SSF75217">
    <property type="entry name" value="alpha/beta knot"/>
    <property type="match status" value="1"/>
</dbReference>
<evidence type="ECO:0000255" key="1">
    <source>
        <dbReference type="HAMAP-Rule" id="MF_00077"/>
    </source>
</evidence>
<protein>
    <recommendedName>
        <fullName evidence="1">tRNA (cytidine(56)-2'-O)-methyltransferase</fullName>
        <ecNumber evidence="1">2.1.1.206</ecNumber>
    </recommendedName>
    <alternativeName>
        <fullName evidence="1">tRNA ribose 2'-O-methyltransferase aTrm56</fullName>
    </alternativeName>
</protein>
<comment type="function">
    <text evidence="1">Specifically catalyzes the AdoMet-dependent 2'-O-ribose methylation of cytidine at position 56 in tRNAs.</text>
</comment>
<comment type="catalytic activity">
    <reaction evidence="1">
        <text>cytidine(56) in tRNA + S-adenosyl-L-methionine = 2'-O-methylcytidine(56) in tRNA + S-adenosyl-L-homocysteine + H(+)</text>
        <dbReference type="Rhea" id="RHEA:42968"/>
        <dbReference type="Rhea" id="RHEA-COMP:10308"/>
        <dbReference type="Rhea" id="RHEA-COMP:10309"/>
        <dbReference type="ChEBI" id="CHEBI:15378"/>
        <dbReference type="ChEBI" id="CHEBI:57856"/>
        <dbReference type="ChEBI" id="CHEBI:59789"/>
        <dbReference type="ChEBI" id="CHEBI:74495"/>
        <dbReference type="ChEBI" id="CHEBI:82748"/>
        <dbReference type="EC" id="2.1.1.206"/>
    </reaction>
</comment>
<comment type="subunit">
    <text evidence="1">Homodimer.</text>
</comment>
<comment type="subcellular location">
    <subcellularLocation>
        <location evidence="1">Cytoplasm</location>
    </subcellularLocation>
</comment>
<comment type="similarity">
    <text evidence="1">Belongs to the aTrm56 family.</text>
</comment>
<organism>
    <name type="scientific">Halobacterium salinarum (strain ATCC 29341 / DSM 671 / R1)</name>
    <dbReference type="NCBI Taxonomy" id="478009"/>
    <lineage>
        <taxon>Archaea</taxon>
        <taxon>Methanobacteriati</taxon>
        <taxon>Methanobacteriota</taxon>
        <taxon>Stenosarchaea group</taxon>
        <taxon>Halobacteria</taxon>
        <taxon>Halobacteriales</taxon>
        <taxon>Halobacteriaceae</taxon>
        <taxon>Halobacterium</taxon>
        <taxon>Halobacterium salinarum NRC-34001</taxon>
    </lineage>
</organism>
<sequence length="192" mass="21021">MQSHPEVAVLRYGHRPGRDDRMTTHVGLTARALGADRVLFPDNATQAAETVRDITGRFGGPFDVERTTELNATIEDWPGVVVHLTMYGEQLQSVDDEIRTTHREEPVLVVVGGEKVPGDVYEAADWNVGVTNQPHSEVAGLAVFLDRLFDGRELEQGYENAERRVIPEELGKHVVDVEDGDHAEGAAAGDGD</sequence>